<evidence type="ECO:0000255" key="1">
    <source>
        <dbReference type="HAMAP-Rule" id="MF_01328"/>
    </source>
</evidence>
<evidence type="ECO:0000305" key="2"/>
<keyword id="KW-0687">Ribonucleoprotein</keyword>
<keyword id="KW-0689">Ribosomal protein</keyword>
<keyword id="KW-0694">RNA-binding</keyword>
<keyword id="KW-0699">rRNA-binding</keyword>
<accession>B9KL92</accession>
<organism>
    <name type="scientific">Cereibacter sphaeroides (strain KD131 / KCTC 12085)</name>
    <name type="common">Rhodobacter sphaeroides</name>
    <dbReference type="NCBI Taxonomy" id="557760"/>
    <lineage>
        <taxon>Bacteria</taxon>
        <taxon>Pseudomonadati</taxon>
        <taxon>Pseudomonadota</taxon>
        <taxon>Alphaproteobacteria</taxon>
        <taxon>Rhodobacterales</taxon>
        <taxon>Paracoccaceae</taxon>
        <taxon>Cereibacter</taxon>
    </lineage>
</organism>
<feature type="chain" id="PRO_1000166021" description="Large ribosomal subunit protein uL4">
    <location>
        <begin position="1"/>
        <end position="206"/>
    </location>
</feature>
<comment type="function">
    <text evidence="1">One of the primary rRNA binding proteins, this protein initially binds near the 5'-end of the 23S rRNA. It is important during the early stages of 50S assembly. It makes multiple contacts with different domains of the 23S rRNA in the assembled 50S subunit and ribosome.</text>
</comment>
<comment type="function">
    <text evidence="1">Forms part of the polypeptide exit tunnel.</text>
</comment>
<comment type="subunit">
    <text evidence="1">Part of the 50S ribosomal subunit.</text>
</comment>
<comment type="similarity">
    <text evidence="1">Belongs to the universal ribosomal protein uL4 family.</text>
</comment>
<gene>
    <name evidence="1" type="primary">rplD</name>
    <name type="ordered locus">RSKD131_0015</name>
</gene>
<name>RL4_CERSK</name>
<dbReference type="EMBL" id="CP001150">
    <property type="protein sequence ID" value="ACL99874.1"/>
    <property type="molecule type" value="Genomic_DNA"/>
</dbReference>
<dbReference type="RefSeq" id="WP_002722493.1">
    <property type="nucleotide sequence ID" value="NC_011963.1"/>
</dbReference>
<dbReference type="SMR" id="B9KL92"/>
<dbReference type="GeneID" id="67445501"/>
<dbReference type="KEGG" id="rsk:RSKD131_0015"/>
<dbReference type="HOGENOM" id="CLU_041575_5_1_5"/>
<dbReference type="GO" id="GO:1990904">
    <property type="term" value="C:ribonucleoprotein complex"/>
    <property type="evidence" value="ECO:0007669"/>
    <property type="project" value="UniProtKB-KW"/>
</dbReference>
<dbReference type="GO" id="GO:0005840">
    <property type="term" value="C:ribosome"/>
    <property type="evidence" value="ECO:0007669"/>
    <property type="project" value="UniProtKB-KW"/>
</dbReference>
<dbReference type="GO" id="GO:0019843">
    <property type="term" value="F:rRNA binding"/>
    <property type="evidence" value="ECO:0007669"/>
    <property type="project" value="UniProtKB-UniRule"/>
</dbReference>
<dbReference type="GO" id="GO:0003735">
    <property type="term" value="F:structural constituent of ribosome"/>
    <property type="evidence" value="ECO:0007669"/>
    <property type="project" value="InterPro"/>
</dbReference>
<dbReference type="GO" id="GO:0006412">
    <property type="term" value="P:translation"/>
    <property type="evidence" value="ECO:0007669"/>
    <property type="project" value="UniProtKB-UniRule"/>
</dbReference>
<dbReference type="Gene3D" id="3.40.1370.10">
    <property type="match status" value="1"/>
</dbReference>
<dbReference type="HAMAP" id="MF_01328_B">
    <property type="entry name" value="Ribosomal_uL4_B"/>
    <property type="match status" value="1"/>
</dbReference>
<dbReference type="InterPro" id="IPR002136">
    <property type="entry name" value="Ribosomal_uL4"/>
</dbReference>
<dbReference type="InterPro" id="IPR013005">
    <property type="entry name" value="Ribosomal_uL4-like"/>
</dbReference>
<dbReference type="InterPro" id="IPR023574">
    <property type="entry name" value="Ribosomal_uL4_dom_sf"/>
</dbReference>
<dbReference type="NCBIfam" id="TIGR03953">
    <property type="entry name" value="rplD_bact"/>
    <property type="match status" value="1"/>
</dbReference>
<dbReference type="PANTHER" id="PTHR10746">
    <property type="entry name" value="50S RIBOSOMAL PROTEIN L4"/>
    <property type="match status" value="1"/>
</dbReference>
<dbReference type="PANTHER" id="PTHR10746:SF6">
    <property type="entry name" value="LARGE RIBOSOMAL SUBUNIT PROTEIN UL4M"/>
    <property type="match status" value="1"/>
</dbReference>
<dbReference type="Pfam" id="PF00573">
    <property type="entry name" value="Ribosomal_L4"/>
    <property type="match status" value="1"/>
</dbReference>
<dbReference type="SUPFAM" id="SSF52166">
    <property type="entry name" value="Ribosomal protein L4"/>
    <property type="match status" value="1"/>
</dbReference>
<proteinExistence type="inferred from homology"/>
<sequence length="206" mass="22234">MKAEVIKLDASPAGSIELDDAIFGLEPRADILHRVVRWQRAKAQAGTHSVLGKSDVSYSTKKIYRQKGTGGARHGSKKAPIFRHGGVYKGPTPRSHAHDLNKKFRALGLKHALSSKATTGNLIVLEDIALAEGKTAMLAKAVKELGWKRVLVIDGADINENFAKAARNLEGVDVLPSIGANVYDILKRDTLVITKAGVEALEARLK</sequence>
<reference key="1">
    <citation type="journal article" date="2009" name="J. Bacteriol.">
        <title>Complete genome sequence of Rhodobacter sphaeroides KD131.</title>
        <authorList>
            <person name="Lim S.-K."/>
            <person name="Kim S.J."/>
            <person name="Cha S.H."/>
            <person name="Oh Y.-K."/>
            <person name="Rhee H.-J."/>
            <person name="Kim M.-S."/>
            <person name="Lee J.K."/>
        </authorList>
    </citation>
    <scope>NUCLEOTIDE SEQUENCE [LARGE SCALE GENOMIC DNA]</scope>
    <source>
        <strain>KD131 / KCTC 12085</strain>
    </source>
</reference>
<protein>
    <recommendedName>
        <fullName evidence="1">Large ribosomal subunit protein uL4</fullName>
    </recommendedName>
    <alternativeName>
        <fullName evidence="2">50S ribosomal protein L4</fullName>
    </alternativeName>
</protein>